<protein>
    <recommendedName>
        <fullName evidence="1">Ribonuclease H</fullName>
        <shortName evidence="1">RNase H</shortName>
        <ecNumber evidence="1">3.1.26.4</ecNumber>
    </recommendedName>
</protein>
<feature type="chain" id="PRO_1000090909" description="Ribonuclease H">
    <location>
        <begin position="1"/>
        <end position="148"/>
    </location>
</feature>
<feature type="domain" description="RNase H type-1" evidence="2">
    <location>
        <begin position="1"/>
        <end position="142"/>
    </location>
</feature>
<feature type="region of interest" description="Disordered" evidence="3">
    <location>
        <begin position="129"/>
        <end position="148"/>
    </location>
</feature>
<feature type="binding site" evidence="1">
    <location>
        <position position="10"/>
    </location>
    <ligand>
        <name>Mg(2+)</name>
        <dbReference type="ChEBI" id="CHEBI:18420"/>
        <label>1</label>
    </ligand>
</feature>
<feature type="binding site" evidence="1">
    <location>
        <position position="10"/>
    </location>
    <ligand>
        <name>Mg(2+)</name>
        <dbReference type="ChEBI" id="CHEBI:18420"/>
        <label>2</label>
    </ligand>
</feature>
<feature type="binding site" evidence="1">
    <location>
        <position position="48"/>
    </location>
    <ligand>
        <name>Mg(2+)</name>
        <dbReference type="ChEBI" id="CHEBI:18420"/>
        <label>1</label>
    </ligand>
</feature>
<feature type="binding site" evidence="1">
    <location>
        <position position="70"/>
    </location>
    <ligand>
        <name>Mg(2+)</name>
        <dbReference type="ChEBI" id="CHEBI:18420"/>
        <label>1</label>
    </ligand>
</feature>
<feature type="binding site" evidence="1">
    <location>
        <position position="134"/>
    </location>
    <ligand>
        <name>Mg(2+)</name>
        <dbReference type="ChEBI" id="CHEBI:18420"/>
        <label>2</label>
    </ligand>
</feature>
<name>RNH_PSEPW</name>
<keyword id="KW-0963">Cytoplasm</keyword>
<keyword id="KW-0255">Endonuclease</keyword>
<keyword id="KW-0378">Hydrolase</keyword>
<keyword id="KW-0460">Magnesium</keyword>
<keyword id="KW-0479">Metal-binding</keyword>
<keyword id="KW-0540">Nuclease</keyword>
<gene>
    <name evidence="1" type="primary">rnhA</name>
    <name type="ordered locus">PputW619_3467</name>
</gene>
<accession>B1JBN1</accession>
<evidence type="ECO:0000255" key="1">
    <source>
        <dbReference type="HAMAP-Rule" id="MF_00042"/>
    </source>
</evidence>
<evidence type="ECO:0000255" key="2">
    <source>
        <dbReference type="PROSITE-ProRule" id="PRU00408"/>
    </source>
</evidence>
<evidence type="ECO:0000256" key="3">
    <source>
        <dbReference type="SAM" id="MobiDB-lite"/>
    </source>
</evidence>
<reference key="1">
    <citation type="submission" date="2008-02" db="EMBL/GenBank/DDBJ databases">
        <title>Complete sequence of Pseudomonas putida W619.</title>
        <authorList>
            <person name="Copeland A."/>
            <person name="Lucas S."/>
            <person name="Lapidus A."/>
            <person name="Barry K."/>
            <person name="Detter J.C."/>
            <person name="Glavina del Rio T."/>
            <person name="Dalin E."/>
            <person name="Tice H."/>
            <person name="Pitluck S."/>
            <person name="Chain P."/>
            <person name="Malfatti S."/>
            <person name="Shin M."/>
            <person name="Vergez L."/>
            <person name="Schmutz J."/>
            <person name="Larimer F."/>
            <person name="Land M."/>
            <person name="Hauser L."/>
            <person name="Kyrpides N."/>
            <person name="Kim E."/>
            <person name="Taghavi S."/>
            <person name="Vangronsveld D."/>
            <person name="van der Lelie D."/>
            <person name="Richardson P."/>
        </authorList>
    </citation>
    <scope>NUCLEOTIDE SEQUENCE [LARGE SCALE GENOMIC DNA]</scope>
    <source>
        <strain>W619</strain>
    </source>
</reference>
<sequence>MSDSVELYTDGACKGNPGPGGWGVLLIYKGVEKELWGGERETTNNRMELMAAIQGLMALKRECEVVLTTDSQYVMKGINEWMVNWKKRGWKTAAKEPVKNADLWQQLDEQVNRHKVTWKWVRGHIGHPGNERADQLANRGVDEVRAKR</sequence>
<comment type="function">
    <text evidence="1">Endonuclease that specifically degrades the RNA of RNA-DNA hybrids.</text>
</comment>
<comment type="catalytic activity">
    <reaction evidence="1">
        <text>Endonucleolytic cleavage to 5'-phosphomonoester.</text>
        <dbReference type="EC" id="3.1.26.4"/>
    </reaction>
</comment>
<comment type="cofactor">
    <cofactor evidence="1">
        <name>Mg(2+)</name>
        <dbReference type="ChEBI" id="CHEBI:18420"/>
    </cofactor>
    <text evidence="1">Binds 1 Mg(2+) ion per subunit. May bind a second metal ion at a regulatory site, or after substrate binding.</text>
</comment>
<comment type="subunit">
    <text evidence="1">Monomer.</text>
</comment>
<comment type="subcellular location">
    <subcellularLocation>
        <location evidence="1">Cytoplasm</location>
    </subcellularLocation>
</comment>
<comment type="similarity">
    <text evidence="1">Belongs to the RNase H family.</text>
</comment>
<dbReference type="EC" id="3.1.26.4" evidence="1"/>
<dbReference type="EMBL" id="CP000949">
    <property type="protein sequence ID" value="ACA73950.1"/>
    <property type="molecule type" value="Genomic_DNA"/>
</dbReference>
<dbReference type="SMR" id="B1JBN1"/>
<dbReference type="STRING" id="390235.PputW619_3467"/>
<dbReference type="KEGG" id="ppw:PputW619_3467"/>
<dbReference type="eggNOG" id="COG0328">
    <property type="taxonomic scope" value="Bacteria"/>
</dbReference>
<dbReference type="HOGENOM" id="CLU_030894_6_0_6"/>
<dbReference type="OrthoDB" id="7845843at2"/>
<dbReference type="GO" id="GO:0005737">
    <property type="term" value="C:cytoplasm"/>
    <property type="evidence" value="ECO:0007669"/>
    <property type="project" value="UniProtKB-SubCell"/>
</dbReference>
<dbReference type="GO" id="GO:0000287">
    <property type="term" value="F:magnesium ion binding"/>
    <property type="evidence" value="ECO:0007669"/>
    <property type="project" value="UniProtKB-UniRule"/>
</dbReference>
<dbReference type="GO" id="GO:0003676">
    <property type="term" value="F:nucleic acid binding"/>
    <property type="evidence" value="ECO:0007669"/>
    <property type="project" value="InterPro"/>
</dbReference>
<dbReference type="GO" id="GO:0004523">
    <property type="term" value="F:RNA-DNA hybrid ribonuclease activity"/>
    <property type="evidence" value="ECO:0007669"/>
    <property type="project" value="UniProtKB-UniRule"/>
</dbReference>
<dbReference type="GO" id="GO:0043137">
    <property type="term" value="P:DNA replication, removal of RNA primer"/>
    <property type="evidence" value="ECO:0007669"/>
    <property type="project" value="TreeGrafter"/>
</dbReference>
<dbReference type="CDD" id="cd09278">
    <property type="entry name" value="RNase_HI_prokaryote_like"/>
    <property type="match status" value="1"/>
</dbReference>
<dbReference type="FunFam" id="3.30.420.10:FF:000089">
    <property type="entry name" value="Ribonuclease H"/>
    <property type="match status" value="1"/>
</dbReference>
<dbReference type="Gene3D" id="3.30.420.10">
    <property type="entry name" value="Ribonuclease H-like superfamily/Ribonuclease H"/>
    <property type="match status" value="1"/>
</dbReference>
<dbReference type="HAMAP" id="MF_00042">
    <property type="entry name" value="RNase_H"/>
    <property type="match status" value="1"/>
</dbReference>
<dbReference type="InterPro" id="IPR050092">
    <property type="entry name" value="RNase_H"/>
</dbReference>
<dbReference type="InterPro" id="IPR012337">
    <property type="entry name" value="RNaseH-like_sf"/>
</dbReference>
<dbReference type="InterPro" id="IPR002156">
    <property type="entry name" value="RNaseH_domain"/>
</dbReference>
<dbReference type="InterPro" id="IPR036397">
    <property type="entry name" value="RNaseH_sf"/>
</dbReference>
<dbReference type="InterPro" id="IPR022892">
    <property type="entry name" value="RNaseHI"/>
</dbReference>
<dbReference type="NCBIfam" id="NF001236">
    <property type="entry name" value="PRK00203.1"/>
    <property type="match status" value="1"/>
</dbReference>
<dbReference type="PANTHER" id="PTHR10642">
    <property type="entry name" value="RIBONUCLEASE H1"/>
    <property type="match status" value="1"/>
</dbReference>
<dbReference type="PANTHER" id="PTHR10642:SF26">
    <property type="entry name" value="RIBONUCLEASE H1"/>
    <property type="match status" value="1"/>
</dbReference>
<dbReference type="Pfam" id="PF00075">
    <property type="entry name" value="RNase_H"/>
    <property type="match status" value="1"/>
</dbReference>
<dbReference type="SUPFAM" id="SSF53098">
    <property type="entry name" value="Ribonuclease H-like"/>
    <property type="match status" value="1"/>
</dbReference>
<dbReference type="PROSITE" id="PS50879">
    <property type="entry name" value="RNASE_H_1"/>
    <property type="match status" value="1"/>
</dbReference>
<organism>
    <name type="scientific">Pseudomonas putida (strain W619)</name>
    <dbReference type="NCBI Taxonomy" id="390235"/>
    <lineage>
        <taxon>Bacteria</taxon>
        <taxon>Pseudomonadati</taxon>
        <taxon>Pseudomonadota</taxon>
        <taxon>Gammaproteobacteria</taxon>
        <taxon>Pseudomonadales</taxon>
        <taxon>Pseudomonadaceae</taxon>
        <taxon>Pseudomonas</taxon>
    </lineage>
</organism>
<proteinExistence type="inferred from homology"/>